<accession>Q9RV97</accession>
<proteinExistence type="inferred from homology"/>
<comment type="function">
    <text evidence="1">Functions in the biosynthesis of branched-chain amino acids. Catalyzes the dehydration of (2R,3R)-2,3-dihydroxy-3-methylpentanoate (2,3-dihydroxy-3-methylvalerate) into 2-oxo-3-methylpentanoate (2-oxo-3-methylvalerate) and of (2R)-2,3-dihydroxy-3-methylbutanoate (2,3-dihydroxyisovalerate) into 2-oxo-3-methylbutanoate (2-oxoisovalerate), the penultimate precursor to L-isoleucine and L-valine, respectively.</text>
</comment>
<comment type="catalytic activity">
    <reaction evidence="1">
        <text>(2R)-2,3-dihydroxy-3-methylbutanoate = 3-methyl-2-oxobutanoate + H2O</text>
        <dbReference type="Rhea" id="RHEA:24809"/>
        <dbReference type="ChEBI" id="CHEBI:11851"/>
        <dbReference type="ChEBI" id="CHEBI:15377"/>
        <dbReference type="ChEBI" id="CHEBI:49072"/>
        <dbReference type="EC" id="4.2.1.9"/>
    </reaction>
    <physiologicalReaction direction="left-to-right" evidence="1">
        <dbReference type="Rhea" id="RHEA:24810"/>
    </physiologicalReaction>
</comment>
<comment type="catalytic activity">
    <reaction evidence="1">
        <text>(2R,3R)-2,3-dihydroxy-3-methylpentanoate = (S)-3-methyl-2-oxopentanoate + H2O</text>
        <dbReference type="Rhea" id="RHEA:27694"/>
        <dbReference type="ChEBI" id="CHEBI:15377"/>
        <dbReference type="ChEBI" id="CHEBI:35146"/>
        <dbReference type="ChEBI" id="CHEBI:49258"/>
        <dbReference type="EC" id="4.2.1.9"/>
    </reaction>
    <physiologicalReaction direction="left-to-right" evidence="1">
        <dbReference type="Rhea" id="RHEA:27695"/>
    </physiologicalReaction>
</comment>
<comment type="cofactor">
    <cofactor evidence="1">
        <name>[2Fe-2S] cluster</name>
        <dbReference type="ChEBI" id="CHEBI:190135"/>
    </cofactor>
    <text evidence="1">Binds 1 [2Fe-2S] cluster per subunit. This cluster acts as a Lewis acid cofactor.</text>
</comment>
<comment type="cofactor">
    <cofactor evidence="1">
        <name>Mg(2+)</name>
        <dbReference type="ChEBI" id="CHEBI:18420"/>
    </cofactor>
</comment>
<comment type="pathway">
    <text evidence="1">Amino-acid biosynthesis; L-isoleucine biosynthesis; L-isoleucine from 2-oxobutanoate: step 3/4.</text>
</comment>
<comment type="pathway">
    <text evidence="1">Amino-acid biosynthesis; L-valine biosynthesis; L-valine from pyruvate: step 3/4.</text>
</comment>
<comment type="subunit">
    <text evidence="1">Homodimer.</text>
</comment>
<comment type="similarity">
    <text evidence="1">Belongs to the IlvD/Edd family.</text>
</comment>
<protein>
    <recommendedName>
        <fullName evidence="1">Dihydroxy-acid dehydratase</fullName>
        <shortName evidence="1">DAD</shortName>
        <ecNumber evidence="1">4.2.1.9</ecNumber>
    </recommendedName>
</protein>
<feature type="chain" id="PRO_0000103464" description="Dihydroxy-acid dehydratase">
    <location>
        <begin position="1"/>
        <end position="607"/>
    </location>
</feature>
<feature type="active site" description="Proton acceptor" evidence="1">
    <location>
        <position position="515"/>
    </location>
</feature>
<feature type="binding site" evidence="1">
    <location>
        <position position="81"/>
    </location>
    <ligand>
        <name>Mg(2+)</name>
        <dbReference type="ChEBI" id="CHEBI:18420"/>
    </ligand>
</feature>
<feature type="binding site" evidence="1">
    <location>
        <position position="122"/>
    </location>
    <ligand>
        <name>[2Fe-2S] cluster</name>
        <dbReference type="ChEBI" id="CHEBI:190135"/>
    </ligand>
</feature>
<feature type="binding site" evidence="1">
    <location>
        <position position="123"/>
    </location>
    <ligand>
        <name>Mg(2+)</name>
        <dbReference type="ChEBI" id="CHEBI:18420"/>
    </ligand>
</feature>
<feature type="binding site" description="via carbamate group" evidence="1">
    <location>
        <position position="124"/>
    </location>
    <ligand>
        <name>Mg(2+)</name>
        <dbReference type="ChEBI" id="CHEBI:18420"/>
    </ligand>
</feature>
<feature type="binding site" evidence="1">
    <location>
        <position position="195"/>
    </location>
    <ligand>
        <name>[2Fe-2S] cluster</name>
        <dbReference type="ChEBI" id="CHEBI:190135"/>
    </ligand>
</feature>
<feature type="binding site" evidence="1">
    <location>
        <position position="489"/>
    </location>
    <ligand>
        <name>Mg(2+)</name>
        <dbReference type="ChEBI" id="CHEBI:18420"/>
    </ligand>
</feature>
<feature type="modified residue" description="N6-carboxylysine" evidence="1">
    <location>
        <position position="124"/>
    </location>
</feature>
<organism>
    <name type="scientific">Deinococcus radiodurans (strain ATCC 13939 / DSM 20539 / JCM 16871 / CCUG 27074 / LMG 4051 / NBRC 15346 / NCIMB 9279 / VKM B-1422 / R1)</name>
    <dbReference type="NCBI Taxonomy" id="243230"/>
    <lineage>
        <taxon>Bacteria</taxon>
        <taxon>Thermotogati</taxon>
        <taxon>Deinococcota</taxon>
        <taxon>Deinococci</taxon>
        <taxon>Deinococcales</taxon>
        <taxon>Deinococcaceae</taxon>
        <taxon>Deinococcus</taxon>
    </lineage>
</organism>
<gene>
    <name evidence="1" type="primary">ilvD</name>
    <name type="ordered locus">DR_1132</name>
</gene>
<dbReference type="EC" id="4.2.1.9" evidence="1"/>
<dbReference type="EMBL" id="AE000513">
    <property type="protein sequence ID" value="AAF10706.1"/>
    <property type="molecule type" value="Genomic_DNA"/>
</dbReference>
<dbReference type="PIR" id="C75432">
    <property type="entry name" value="C75432"/>
</dbReference>
<dbReference type="RefSeq" id="NP_294856.1">
    <property type="nucleotide sequence ID" value="NC_001263.1"/>
</dbReference>
<dbReference type="RefSeq" id="WP_010887775.1">
    <property type="nucleotide sequence ID" value="NC_001263.1"/>
</dbReference>
<dbReference type="SMR" id="Q9RV97"/>
<dbReference type="FunCoup" id="Q9RV97">
    <property type="interactions" value="452"/>
</dbReference>
<dbReference type="STRING" id="243230.DR_1132"/>
<dbReference type="PaxDb" id="243230-DR_1132"/>
<dbReference type="EnsemblBacteria" id="AAF10706">
    <property type="protein sequence ID" value="AAF10706"/>
    <property type="gene ID" value="DR_1132"/>
</dbReference>
<dbReference type="GeneID" id="69517379"/>
<dbReference type="KEGG" id="dra:DR_1132"/>
<dbReference type="PATRIC" id="fig|243230.17.peg.1328"/>
<dbReference type="eggNOG" id="COG0129">
    <property type="taxonomic scope" value="Bacteria"/>
</dbReference>
<dbReference type="HOGENOM" id="CLU_014271_4_2_0"/>
<dbReference type="InParanoid" id="Q9RV97"/>
<dbReference type="OrthoDB" id="9807077at2"/>
<dbReference type="UniPathway" id="UPA00047">
    <property type="reaction ID" value="UER00057"/>
</dbReference>
<dbReference type="UniPathway" id="UPA00049">
    <property type="reaction ID" value="UER00061"/>
</dbReference>
<dbReference type="Proteomes" id="UP000002524">
    <property type="component" value="Chromosome 1"/>
</dbReference>
<dbReference type="GO" id="GO:0005829">
    <property type="term" value="C:cytosol"/>
    <property type="evidence" value="ECO:0000318"/>
    <property type="project" value="GO_Central"/>
</dbReference>
<dbReference type="GO" id="GO:0051537">
    <property type="term" value="F:2 iron, 2 sulfur cluster binding"/>
    <property type="evidence" value="ECO:0007669"/>
    <property type="project" value="UniProtKB-UniRule"/>
</dbReference>
<dbReference type="GO" id="GO:0004160">
    <property type="term" value="F:dihydroxy-acid dehydratase activity"/>
    <property type="evidence" value="ECO:0007669"/>
    <property type="project" value="UniProtKB-UniRule"/>
</dbReference>
<dbReference type="GO" id="GO:0016836">
    <property type="term" value="F:hydro-lyase activity"/>
    <property type="evidence" value="ECO:0000318"/>
    <property type="project" value="GO_Central"/>
</dbReference>
<dbReference type="GO" id="GO:0000287">
    <property type="term" value="F:magnesium ion binding"/>
    <property type="evidence" value="ECO:0007669"/>
    <property type="project" value="UniProtKB-UniRule"/>
</dbReference>
<dbReference type="GO" id="GO:0009097">
    <property type="term" value="P:isoleucine biosynthetic process"/>
    <property type="evidence" value="ECO:0007669"/>
    <property type="project" value="UniProtKB-UniRule"/>
</dbReference>
<dbReference type="GO" id="GO:0009099">
    <property type="term" value="P:L-valine biosynthetic process"/>
    <property type="evidence" value="ECO:0007669"/>
    <property type="project" value="UniProtKB-UniRule"/>
</dbReference>
<dbReference type="FunFam" id="3.50.30.80:FF:000001">
    <property type="entry name" value="Dihydroxy-acid dehydratase"/>
    <property type="match status" value="1"/>
</dbReference>
<dbReference type="Gene3D" id="3.50.30.80">
    <property type="entry name" value="IlvD/EDD C-terminal domain-like"/>
    <property type="match status" value="1"/>
</dbReference>
<dbReference type="HAMAP" id="MF_00012">
    <property type="entry name" value="IlvD"/>
    <property type="match status" value="1"/>
</dbReference>
<dbReference type="InterPro" id="IPR042096">
    <property type="entry name" value="Dihydro-acid_dehy_C"/>
</dbReference>
<dbReference type="InterPro" id="IPR004404">
    <property type="entry name" value="DihydroxyA_deHydtase"/>
</dbReference>
<dbReference type="InterPro" id="IPR020558">
    <property type="entry name" value="DiOHA_6PGluconate_deHydtase_CS"/>
</dbReference>
<dbReference type="InterPro" id="IPR056740">
    <property type="entry name" value="ILV_EDD_C"/>
</dbReference>
<dbReference type="InterPro" id="IPR000581">
    <property type="entry name" value="ILV_EDD_N"/>
</dbReference>
<dbReference type="InterPro" id="IPR037237">
    <property type="entry name" value="IlvD/EDD_N"/>
</dbReference>
<dbReference type="NCBIfam" id="TIGR00110">
    <property type="entry name" value="ilvD"/>
    <property type="match status" value="1"/>
</dbReference>
<dbReference type="NCBIfam" id="NF009103">
    <property type="entry name" value="PRK12448.1"/>
    <property type="match status" value="1"/>
</dbReference>
<dbReference type="PANTHER" id="PTHR43661">
    <property type="entry name" value="D-XYLONATE DEHYDRATASE"/>
    <property type="match status" value="1"/>
</dbReference>
<dbReference type="PANTHER" id="PTHR43661:SF3">
    <property type="entry name" value="D-XYLONATE DEHYDRATASE YAGF-RELATED"/>
    <property type="match status" value="1"/>
</dbReference>
<dbReference type="Pfam" id="PF24877">
    <property type="entry name" value="ILV_EDD_C"/>
    <property type="match status" value="1"/>
</dbReference>
<dbReference type="Pfam" id="PF00920">
    <property type="entry name" value="ILVD_EDD_N"/>
    <property type="match status" value="1"/>
</dbReference>
<dbReference type="SUPFAM" id="SSF143975">
    <property type="entry name" value="IlvD/EDD N-terminal domain-like"/>
    <property type="match status" value="1"/>
</dbReference>
<dbReference type="SUPFAM" id="SSF52016">
    <property type="entry name" value="LeuD/IlvD-like"/>
    <property type="match status" value="1"/>
</dbReference>
<dbReference type="PROSITE" id="PS00886">
    <property type="entry name" value="ILVD_EDD_1"/>
    <property type="match status" value="1"/>
</dbReference>
<dbReference type="PROSITE" id="PS00887">
    <property type="entry name" value="ILVD_EDD_2"/>
    <property type="match status" value="1"/>
</dbReference>
<reference key="1">
    <citation type="journal article" date="1999" name="Science">
        <title>Genome sequence of the radioresistant bacterium Deinococcus radiodurans R1.</title>
        <authorList>
            <person name="White O."/>
            <person name="Eisen J.A."/>
            <person name="Heidelberg J.F."/>
            <person name="Hickey E.K."/>
            <person name="Peterson J.D."/>
            <person name="Dodson R.J."/>
            <person name="Haft D.H."/>
            <person name="Gwinn M.L."/>
            <person name="Nelson W.C."/>
            <person name="Richardson D.L."/>
            <person name="Moffat K.S."/>
            <person name="Qin H."/>
            <person name="Jiang L."/>
            <person name="Pamphile W."/>
            <person name="Crosby M."/>
            <person name="Shen M."/>
            <person name="Vamathevan J.J."/>
            <person name="Lam P."/>
            <person name="McDonald L.A."/>
            <person name="Utterback T.R."/>
            <person name="Zalewski C."/>
            <person name="Makarova K.S."/>
            <person name="Aravind L."/>
            <person name="Daly M.J."/>
            <person name="Minton K.W."/>
            <person name="Fleischmann R.D."/>
            <person name="Ketchum K.A."/>
            <person name="Nelson K.E."/>
            <person name="Salzberg S.L."/>
            <person name="Smith H.O."/>
            <person name="Venter J.C."/>
            <person name="Fraser C.M."/>
        </authorList>
    </citation>
    <scope>NUCLEOTIDE SEQUENCE [LARGE SCALE GENOMIC DNA]</scope>
    <source>
        <strain>ATCC 13939 / DSM 20539 / JCM 16871 / CCUG 27074 / LMG 4051 / NBRC 15346 / NCIMB 9279 / VKM B-1422 / R1</strain>
    </source>
</reference>
<sequence>MPTYRSRTTTEGRNMAGARALWRATGMTDGDFQKPIIAVVNSFTQFVPGHVHLKDLGQLVAGEIAAAGGVAKEFNTIAVDDGIAMGHDGMLYSLPSREIIADSVEYMVNAHCADAMVCISNCDKITPGMLMAALRLNIPTVFVSGGPMEAGKVKLGDGEHALDLVDAMVMAADDSVSEEDIELVERSACPTCGSCSGMFTANSMNCLTEALGLSLPGNGSVLATHSDRQNLFKRAGHLIVDLAKRYYEGDDESVLPRSVATYDAFENAMTLDISMGGSTNTVLHLLAAAHEAGVDFTMQDIDQLSRRVPVLCKVAPAKNDVHMEDVHRAGGIMGILGELDRAGLLKTDVSTVHAPSMSAALNEWDVVRNENHHEFYRAAPGGIPTVFAFSQSRRYRELDTDREAGVIRSAEHAFSQDGGLAVLYGNLAEDGCIVKTAGVDESILKFSGPARVFESQDASVDAILSGEVKEGEVVLIRYEGPRGGPGMQEMLYPTSYLKSKGLGKACALVTDGRFSGGSSGLSIGHVSPEAAEGGTIGLVETGDLIEIDIPNRTIHLAVPDAELAARRQKREEEGWHPAEPRPRKITAALRAYASMTTSASRGAVRNI</sequence>
<evidence type="ECO:0000255" key="1">
    <source>
        <dbReference type="HAMAP-Rule" id="MF_00012"/>
    </source>
</evidence>
<name>ILVD_DEIRA</name>
<keyword id="KW-0001">2Fe-2S</keyword>
<keyword id="KW-0028">Amino-acid biosynthesis</keyword>
<keyword id="KW-0100">Branched-chain amino acid biosynthesis</keyword>
<keyword id="KW-0408">Iron</keyword>
<keyword id="KW-0411">Iron-sulfur</keyword>
<keyword id="KW-0456">Lyase</keyword>
<keyword id="KW-0460">Magnesium</keyword>
<keyword id="KW-0479">Metal-binding</keyword>
<keyword id="KW-1185">Reference proteome</keyword>